<dbReference type="EMBL" id="CP000159">
    <property type="protein sequence ID" value="ABC43666.1"/>
    <property type="status" value="ALT_INIT"/>
    <property type="molecule type" value="Genomic_DNA"/>
</dbReference>
<dbReference type="RefSeq" id="WP_013061618.1">
    <property type="nucleotide sequence ID" value="NC_007677.1"/>
</dbReference>
<dbReference type="RefSeq" id="YP_445185.1">
    <property type="nucleotide sequence ID" value="NC_007677.1"/>
</dbReference>
<dbReference type="SMR" id="Q2S3P6"/>
<dbReference type="STRING" id="309807.SRU_1053"/>
<dbReference type="EnsemblBacteria" id="ABC43666">
    <property type="protein sequence ID" value="ABC43666"/>
    <property type="gene ID" value="SRU_1053"/>
</dbReference>
<dbReference type="GeneID" id="83727982"/>
<dbReference type="KEGG" id="sru:SRU_1053"/>
<dbReference type="PATRIC" id="fig|309807.25.peg.1091"/>
<dbReference type="eggNOG" id="COG0200">
    <property type="taxonomic scope" value="Bacteria"/>
</dbReference>
<dbReference type="HOGENOM" id="CLU_055188_4_2_10"/>
<dbReference type="OrthoDB" id="9810293at2"/>
<dbReference type="Proteomes" id="UP000008674">
    <property type="component" value="Chromosome"/>
</dbReference>
<dbReference type="GO" id="GO:0022625">
    <property type="term" value="C:cytosolic large ribosomal subunit"/>
    <property type="evidence" value="ECO:0007669"/>
    <property type="project" value="TreeGrafter"/>
</dbReference>
<dbReference type="GO" id="GO:0019843">
    <property type="term" value="F:rRNA binding"/>
    <property type="evidence" value="ECO:0007669"/>
    <property type="project" value="UniProtKB-UniRule"/>
</dbReference>
<dbReference type="GO" id="GO:0003735">
    <property type="term" value="F:structural constituent of ribosome"/>
    <property type="evidence" value="ECO:0007669"/>
    <property type="project" value="InterPro"/>
</dbReference>
<dbReference type="GO" id="GO:0006412">
    <property type="term" value="P:translation"/>
    <property type="evidence" value="ECO:0007669"/>
    <property type="project" value="UniProtKB-UniRule"/>
</dbReference>
<dbReference type="Gene3D" id="3.100.10.10">
    <property type="match status" value="1"/>
</dbReference>
<dbReference type="HAMAP" id="MF_01341">
    <property type="entry name" value="Ribosomal_uL15"/>
    <property type="match status" value="1"/>
</dbReference>
<dbReference type="InterPro" id="IPR030878">
    <property type="entry name" value="Ribosomal_uL15"/>
</dbReference>
<dbReference type="InterPro" id="IPR021131">
    <property type="entry name" value="Ribosomal_uL15/eL18"/>
</dbReference>
<dbReference type="InterPro" id="IPR036227">
    <property type="entry name" value="Ribosomal_uL15/eL18_sf"/>
</dbReference>
<dbReference type="InterPro" id="IPR005749">
    <property type="entry name" value="Ribosomal_uL15_bac-type"/>
</dbReference>
<dbReference type="InterPro" id="IPR001196">
    <property type="entry name" value="Ribosomal_uL15_CS"/>
</dbReference>
<dbReference type="NCBIfam" id="TIGR01071">
    <property type="entry name" value="rplO_bact"/>
    <property type="match status" value="1"/>
</dbReference>
<dbReference type="PANTHER" id="PTHR12934">
    <property type="entry name" value="50S RIBOSOMAL PROTEIN L15"/>
    <property type="match status" value="1"/>
</dbReference>
<dbReference type="PANTHER" id="PTHR12934:SF11">
    <property type="entry name" value="LARGE RIBOSOMAL SUBUNIT PROTEIN UL15M"/>
    <property type="match status" value="1"/>
</dbReference>
<dbReference type="Pfam" id="PF00828">
    <property type="entry name" value="Ribosomal_L27A"/>
    <property type="match status" value="1"/>
</dbReference>
<dbReference type="SUPFAM" id="SSF52080">
    <property type="entry name" value="Ribosomal proteins L15p and L18e"/>
    <property type="match status" value="1"/>
</dbReference>
<dbReference type="PROSITE" id="PS00475">
    <property type="entry name" value="RIBOSOMAL_L15"/>
    <property type="match status" value="1"/>
</dbReference>
<accession>Q2S3P6</accession>
<feature type="chain" id="PRO_0000251559" description="Large ribosomal subunit protein uL15">
    <location>
        <begin position="1"/>
        <end position="156"/>
    </location>
</feature>
<feature type="region of interest" description="Disordered" evidence="2">
    <location>
        <begin position="1"/>
        <end position="56"/>
    </location>
</feature>
<name>RL15_SALRD</name>
<comment type="function">
    <text evidence="1">Binds to the 23S rRNA.</text>
</comment>
<comment type="subunit">
    <text evidence="1">Part of the 50S ribosomal subunit.</text>
</comment>
<comment type="similarity">
    <text evidence="1">Belongs to the universal ribosomal protein uL15 family.</text>
</comment>
<comment type="sequence caution" evidence="3">
    <conflict type="erroneous initiation">
        <sequence resource="EMBL-CDS" id="ABC43666"/>
    </conflict>
</comment>
<reference key="1">
    <citation type="journal article" date="2005" name="Proc. Natl. Acad. Sci. U.S.A.">
        <title>The genome of Salinibacter ruber: convergence and gene exchange among hyperhalophilic bacteria and archaea.</title>
        <authorList>
            <person name="Mongodin E.F."/>
            <person name="Nelson K.E."/>
            <person name="Daugherty S."/>
            <person name="DeBoy R.T."/>
            <person name="Wister J."/>
            <person name="Khouri H."/>
            <person name="Weidman J."/>
            <person name="Walsh D.A."/>
            <person name="Papke R.T."/>
            <person name="Sanchez Perez G."/>
            <person name="Sharma A.K."/>
            <person name="Nesbo C.L."/>
            <person name="MacLeod D."/>
            <person name="Bapteste E."/>
            <person name="Doolittle W.F."/>
            <person name="Charlebois R.L."/>
            <person name="Legault B."/>
            <person name="Rodriguez-Valera F."/>
        </authorList>
    </citation>
    <scope>NUCLEOTIDE SEQUENCE [LARGE SCALE GENOMIC DNA]</scope>
    <source>
        <strain>DSM 13855 / CECT 5946 / M31</strain>
    </source>
</reference>
<proteinExistence type="inferred from homology"/>
<protein>
    <recommendedName>
        <fullName evidence="1">Large ribosomal subunit protein uL15</fullName>
    </recommendedName>
    <alternativeName>
        <fullName evidence="3">50S ribosomal protein L15</fullName>
    </alternativeName>
</protein>
<organism>
    <name type="scientific">Salinibacter ruber (strain DSM 13855 / M31)</name>
    <dbReference type="NCBI Taxonomy" id="309807"/>
    <lineage>
        <taxon>Bacteria</taxon>
        <taxon>Pseudomonadati</taxon>
        <taxon>Rhodothermota</taxon>
        <taxon>Rhodothermia</taxon>
        <taxon>Rhodothermales</taxon>
        <taxon>Salinibacteraceae</taxon>
        <taxon>Salinibacter</taxon>
    </lineage>
</organism>
<sequence>MDLSNLKPAEGATQAGQRLGRGEGSGRGGHSSTRGTKGQSSRSGSGTRPIWFEGGQTPLFQRVPKHGFNNAPFRTDYAIANVKRLQRLLDEEVLDEDEPVTPEVLADLGVVRTANRVKILGDGDLFDALEVKAHAFSESARQKIKQAGGSVTVVDQ</sequence>
<gene>
    <name evidence="1" type="primary">rplO</name>
    <name type="ordered locus">SRU_1053</name>
</gene>
<keyword id="KW-1185">Reference proteome</keyword>
<keyword id="KW-0687">Ribonucleoprotein</keyword>
<keyword id="KW-0689">Ribosomal protein</keyword>
<keyword id="KW-0694">RNA-binding</keyword>
<keyword id="KW-0699">rRNA-binding</keyword>
<evidence type="ECO:0000255" key="1">
    <source>
        <dbReference type="HAMAP-Rule" id="MF_01341"/>
    </source>
</evidence>
<evidence type="ECO:0000256" key="2">
    <source>
        <dbReference type="SAM" id="MobiDB-lite"/>
    </source>
</evidence>
<evidence type="ECO:0000305" key="3"/>